<feature type="chain" id="PRO_0000125565" description="U6 snRNA-associated Sm-like protein LSm4">
    <location>
        <begin position="1"/>
        <end position="137"/>
    </location>
</feature>
<feature type="domain" description="Sm" evidence="2">
    <location>
        <begin position="2"/>
        <end position="75"/>
    </location>
</feature>
<feature type="region of interest" description="Disordered" evidence="3">
    <location>
        <begin position="82"/>
        <end position="137"/>
    </location>
</feature>
<feature type="compositionally biased region" description="Gly residues" evidence="3">
    <location>
        <begin position="100"/>
        <end position="123"/>
    </location>
</feature>
<feature type="modified residue" description="N-acetylmethionine" evidence="1">
    <location>
        <position position="1"/>
    </location>
</feature>
<gene>
    <name type="primary">Lsm4</name>
</gene>
<protein>
    <recommendedName>
        <fullName>U6 snRNA-associated Sm-like protein LSm4</fullName>
    </recommendedName>
</protein>
<dbReference type="EMBL" id="AJ249439">
    <property type="protein sequence ID" value="CAB65729.1"/>
    <property type="molecule type" value="mRNA"/>
</dbReference>
<dbReference type="RefSeq" id="NP_056631.2">
    <property type="nucleotide sequence ID" value="NM_015816.4"/>
</dbReference>
<dbReference type="SMR" id="Q9QXA5"/>
<dbReference type="BioGRID" id="206115">
    <property type="interactions" value="9"/>
</dbReference>
<dbReference type="DIP" id="DIP-60115N"/>
<dbReference type="FunCoup" id="Q9QXA5">
    <property type="interactions" value="1611"/>
</dbReference>
<dbReference type="IntAct" id="Q9QXA5">
    <property type="interactions" value="1"/>
</dbReference>
<dbReference type="STRING" id="10090.ENSMUSP00000034311"/>
<dbReference type="iPTMnet" id="Q9QXA5"/>
<dbReference type="PhosphoSitePlus" id="Q9QXA5"/>
<dbReference type="SwissPalm" id="Q9QXA5"/>
<dbReference type="jPOST" id="Q9QXA5"/>
<dbReference type="ProteomicsDB" id="252536"/>
<dbReference type="Pumba" id="Q9QXA5"/>
<dbReference type="DNASU" id="50783"/>
<dbReference type="GeneID" id="50783"/>
<dbReference type="KEGG" id="mmu:50783"/>
<dbReference type="AGR" id="MGI:1354692"/>
<dbReference type="CTD" id="25804"/>
<dbReference type="MGI" id="MGI:1354692">
    <property type="gene designation" value="Lsm4"/>
</dbReference>
<dbReference type="eggNOG" id="KOG3293">
    <property type="taxonomic scope" value="Eukaryota"/>
</dbReference>
<dbReference type="InParanoid" id="Q9QXA5"/>
<dbReference type="OrthoDB" id="747253at2759"/>
<dbReference type="Reactome" id="R-MMU-430039">
    <property type="pathway name" value="mRNA decay by 5' to 3' exoribonuclease"/>
</dbReference>
<dbReference type="Reactome" id="R-MMU-72163">
    <property type="pathway name" value="mRNA Splicing - Major Pathway"/>
</dbReference>
<dbReference type="BioGRID-ORCS" id="50783">
    <property type="hits" value="29 hits in 116 CRISPR screens"/>
</dbReference>
<dbReference type="ChiTaRS" id="Lsm4">
    <property type="organism name" value="mouse"/>
</dbReference>
<dbReference type="PRO" id="PR:Q9QXA5"/>
<dbReference type="Proteomes" id="UP000000589">
    <property type="component" value="Unplaced"/>
</dbReference>
<dbReference type="RNAct" id="Q9QXA5">
    <property type="molecule type" value="protein"/>
</dbReference>
<dbReference type="GO" id="GO:0005737">
    <property type="term" value="C:cytoplasm"/>
    <property type="evidence" value="ECO:0000250"/>
    <property type="project" value="MGI"/>
</dbReference>
<dbReference type="GO" id="GO:0005654">
    <property type="term" value="C:nucleoplasm"/>
    <property type="evidence" value="ECO:0000250"/>
    <property type="project" value="MGI"/>
</dbReference>
<dbReference type="GO" id="GO:0005634">
    <property type="term" value="C:nucleus"/>
    <property type="evidence" value="ECO:0000250"/>
    <property type="project" value="UniProtKB"/>
</dbReference>
<dbReference type="GO" id="GO:0005681">
    <property type="term" value="C:spliceosomal complex"/>
    <property type="evidence" value="ECO:0000250"/>
    <property type="project" value="MGI"/>
</dbReference>
<dbReference type="GO" id="GO:0071005">
    <property type="term" value="C:U2-type precatalytic spliceosome"/>
    <property type="evidence" value="ECO:0000250"/>
    <property type="project" value="UniProtKB"/>
</dbReference>
<dbReference type="GO" id="GO:0046540">
    <property type="term" value="C:U4/U6 x U5 tri-snRNP complex"/>
    <property type="evidence" value="ECO:0000250"/>
    <property type="project" value="UniProtKB"/>
</dbReference>
<dbReference type="GO" id="GO:0003723">
    <property type="term" value="F:RNA binding"/>
    <property type="evidence" value="ECO:0007669"/>
    <property type="project" value="UniProtKB-KW"/>
</dbReference>
<dbReference type="GO" id="GO:0000398">
    <property type="term" value="P:mRNA splicing, via spliceosome"/>
    <property type="evidence" value="ECO:0000250"/>
    <property type="project" value="UniProtKB"/>
</dbReference>
<dbReference type="GO" id="GO:0000956">
    <property type="term" value="P:nuclear-transcribed mRNA catabolic process"/>
    <property type="evidence" value="ECO:0007669"/>
    <property type="project" value="InterPro"/>
</dbReference>
<dbReference type="CDD" id="cd01723">
    <property type="entry name" value="LSm4"/>
    <property type="match status" value="1"/>
</dbReference>
<dbReference type="FunFam" id="2.30.30.100:FF:000005">
    <property type="entry name" value="U6 snRNA-associated Sm-like protein LSm4"/>
    <property type="match status" value="1"/>
</dbReference>
<dbReference type="Gene3D" id="2.30.30.100">
    <property type="match status" value="1"/>
</dbReference>
<dbReference type="InterPro" id="IPR034101">
    <property type="entry name" value="Lsm4"/>
</dbReference>
<dbReference type="InterPro" id="IPR027141">
    <property type="entry name" value="LSm4/Sm_D1/D3"/>
</dbReference>
<dbReference type="InterPro" id="IPR010920">
    <property type="entry name" value="LSM_dom_sf"/>
</dbReference>
<dbReference type="InterPro" id="IPR047575">
    <property type="entry name" value="Sm"/>
</dbReference>
<dbReference type="InterPro" id="IPR001163">
    <property type="entry name" value="Sm_dom_euk/arc"/>
</dbReference>
<dbReference type="PANTHER" id="PTHR23338">
    <property type="entry name" value="SMALL NUCLEAR RIBONUCLEOPROTEIN SM"/>
    <property type="match status" value="1"/>
</dbReference>
<dbReference type="Pfam" id="PF01423">
    <property type="entry name" value="LSM"/>
    <property type="match status" value="1"/>
</dbReference>
<dbReference type="SMART" id="SM00651">
    <property type="entry name" value="Sm"/>
    <property type="match status" value="1"/>
</dbReference>
<dbReference type="SUPFAM" id="SSF50182">
    <property type="entry name" value="Sm-like ribonucleoproteins"/>
    <property type="match status" value="1"/>
</dbReference>
<dbReference type="PROSITE" id="PS52002">
    <property type="entry name" value="SM"/>
    <property type="match status" value="1"/>
</dbReference>
<name>LSM4_MOUSE</name>
<organism>
    <name type="scientific">Mus musculus</name>
    <name type="common">Mouse</name>
    <dbReference type="NCBI Taxonomy" id="10090"/>
    <lineage>
        <taxon>Eukaryota</taxon>
        <taxon>Metazoa</taxon>
        <taxon>Chordata</taxon>
        <taxon>Craniata</taxon>
        <taxon>Vertebrata</taxon>
        <taxon>Euteleostomi</taxon>
        <taxon>Mammalia</taxon>
        <taxon>Eutheria</taxon>
        <taxon>Euarchontoglires</taxon>
        <taxon>Glires</taxon>
        <taxon>Rodentia</taxon>
        <taxon>Myomorpha</taxon>
        <taxon>Muroidea</taxon>
        <taxon>Muridae</taxon>
        <taxon>Murinae</taxon>
        <taxon>Mus</taxon>
        <taxon>Mus</taxon>
    </lineage>
</organism>
<accession>Q9QXA5</accession>
<keyword id="KW-0007">Acetylation</keyword>
<keyword id="KW-0507">mRNA processing</keyword>
<keyword id="KW-0508">mRNA splicing</keyword>
<keyword id="KW-0539">Nucleus</keyword>
<keyword id="KW-1185">Reference proteome</keyword>
<keyword id="KW-0687">Ribonucleoprotein</keyword>
<keyword id="KW-0694">RNA-binding</keyword>
<keyword id="KW-0747">Spliceosome</keyword>
<evidence type="ECO:0000250" key="1">
    <source>
        <dbReference type="UniProtKB" id="Q9Y4Z0"/>
    </source>
</evidence>
<evidence type="ECO:0000255" key="2">
    <source>
        <dbReference type="PROSITE-ProRule" id="PRU01346"/>
    </source>
</evidence>
<evidence type="ECO:0000256" key="3">
    <source>
        <dbReference type="SAM" id="MobiDB-lite"/>
    </source>
</evidence>
<evidence type="ECO:0000269" key="4">
    <source>
    </source>
</evidence>
<evidence type="ECO:0000305" key="5"/>
<sequence>MLPLSLLKTAQNHPMLVELKNGETYNGHLVSCDNWMNINLREVICTSRDGDKFWRMPECYIRGSTIKYLRIPDEIIDMVREEAAKGRGRGGPQQKQQKGRGMGGAGRGVFGGRGRGGIPGAGRGQPEKKPGRQAGKQ</sequence>
<comment type="function">
    <text evidence="1">Plays a role in pre-mRNA splicing as component of the U4/U6-U5 tri-snRNP complex that is involved in spliceosome assembly, and as component of the precatalytic spliceosome (spliceosome B complex). The heptameric LSM2-8 complex binds specifically to the 3'-terminal U-tract of U6 snRNA.</text>
</comment>
<comment type="subunit">
    <text evidence="1">Component of the precatalytic spliceosome (spliceosome B complex). Component of the U4/U6-U5 tri-snRNP complex, a building block of the precatalytic spliceosome (spliceosome B complex). The U4/U6-U5 tri-snRNP complex is composed of the U4, U6 and U5 snRNAs and at least PRPF3, PRPF4, PRPF6, PRPF8, PRPF31, SNRNP200, TXNL4A, SNRNP40, SNRPB, SNRPD1, SNRPD2, SNRPD3, SNRPE, SNRPF, SNRPG, DDX23, CD2BP2, PPIH, SNU13, EFTUD2, SART1 and USP39, plus LSM2, LSM3, LSM4, LSM5, LSM6, LSM7 and LSM8. LSM2, LSM3, LSM4, LSM5, LSM6, LSM7 and LSM8 form a heptameric, ring-shaped subcomplex (the LSM2-8 complex) that is part of the U4/U6-U5 tri-snRNP complex and the precatalytic spliceosome.</text>
</comment>
<comment type="subcellular location">
    <subcellularLocation>
        <location evidence="4">Nucleus</location>
    </subcellularLocation>
</comment>
<comment type="tissue specificity">
    <text evidence="4">Ubiquitous.</text>
</comment>
<comment type="similarity">
    <text evidence="5">Belongs to the snRNP Sm proteins family.</text>
</comment>
<reference key="1">
    <citation type="journal article" date="2000" name="Mol. Cell. Biol.">
        <title>Peri-implantation lethality in mice lacking the Sm motif-containing protein Lsm4.</title>
        <authorList>
            <person name="Hirsch E."/>
            <person name="Oohashi T."/>
            <person name="Ahmad M."/>
            <person name="Stamm S."/>
            <person name="Faessler R."/>
        </authorList>
    </citation>
    <scope>NUCLEOTIDE SEQUENCE [MRNA]</scope>
    <scope>SUBCELLULAR LOCATION</scope>
    <scope>TISSUE SPECIFICITY</scope>
</reference>
<reference key="2">
    <citation type="journal article" date="2010" name="Cell">
        <title>A tissue-specific atlas of mouse protein phosphorylation and expression.</title>
        <authorList>
            <person name="Huttlin E.L."/>
            <person name="Jedrychowski M.P."/>
            <person name="Elias J.E."/>
            <person name="Goswami T."/>
            <person name="Rad R."/>
            <person name="Beausoleil S.A."/>
            <person name="Villen J."/>
            <person name="Haas W."/>
            <person name="Sowa M.E."/>
            <person name="Gygi S.P."/>
        </authorList>
    </citation>
    <scope>IDENTIFICATION BY MASS SPECTROMETRY [LARGE SCALE ANALYSIS]</scope>
    <source>
        <tissue>Brain</tissue>
        <tissue>Heart</tissue>
        <tissue>Kidney</tissue>
        <tissue>Lung</tissue>
        <tissue>Testis</tissue>
    </source>
</reference>
<proteinExistence type="evidence at protein level"/>